<proteinExistence type="inferred from homology"/>
<accession>Q187D2</accession>
<reference key="1">
    <citation type="journal article" date="2006" name="Nat. Genet.">
        <title>The multidrug-resistant human pathogen Clostridium difficile has a highly mobile, mosaic genome.</title>
        <authorList>
            <person name="Sebaihia M."/>
            <person name="Wren B.W."/>
            <person name="Mullany P."/>
            <person name="Fairweather N.F."/>
            <person name="Minton N."/>
            <person name="Stabler R."/>
            <person name="Thomson N.R."/>
            <person name="Roberts A.P."/>
            <person name="Cerdeno-Tarraga A.M."/>
            <person name="Wang H."/>
            <person name="Holden M.T.G."/>
            <person name="Wright A."/>
            <person name="Churcher C."/>
            <person name="Quail M.A."/>
            <person name="Baker S."/>
            <person name="Bason N."/>
            <person name="Brooks K."/>
            <person name="Chillingworth T."/>
            <person name="Cronin A."/>
            <person name="Davis P."/>
            <person name="Dowd L."/>
            <person name="Fraser A."/>
            <person name="Feltwell T."/>
            <person name="Hance Z."/>
            <person name="Holroyd S."/>
            <person name="Jagels K."/>
            <person name="Moule S."/>
            <person name="Mungall K."/>
            <person name="Price C."/>
            <person name="Rabbinowitsch E."/>
            <person name="Sharp S."/>
            <person name="Simmonds M."/>
            <person name="Stevens K."/>
            <person name="Unwin L."/>
            <person name="Whithead S."/>
            <person name="Dupuy B."/>
            <person name="Dougan G."/>
            <person name="Barrell B."/>
            <person name="Parkhill J."/>
        </authorList>
    </citation>
    <scope>NUCLEOTIDE SEQUENCE [LARGE SCALE GENOMIC DNA]</scope>
    <source>
        <strain>630</strain>
    </source>
</reference>
<organism>
    <name type="scientific">Clostridioides difficile (strain 630)</name>
    <name type="common">Peptoclostridium difficile</name>
    <dbReference type="NCBI Taxonomy" id="272563"/>
    <lineage>
        <taxon>Bacteria</taxon>
        <taxon>Bacillati</taxon>
        <taxon>Bacillota</taxon>
        <taxon>Clostridia</taxon>
        <taxon>Peptostreptococcales</taxon>
        <taxon>Peptostreptococcaceae</taxon>
        <taxon>Clostridioides</taxon>
    </lineage>
</organism>
<keyword id="KW-1185">Reference proteome</keyword>
<sequence length="247" mass="29186">MIIMLSPAKNMKNIEVFDRDLSLPCFIDNTKEIVENIKTFAIEDFKNKMKINEKLAVLNKNRFESIKFDRLGNPAILTYDGIQYKNIEAENFTRKDEEFANSCIRIISGLYGVVKPYDSIYEYRLEMQTKLRVGEFKNLYEYWGNRIYKELIKEKTAIVNLSSNEYSKSIEKFIKDSDTYITCTFKVNKNGILKVESTQAKKARGMMTKYIVKNRIRDIEELKKFNLEGYKYKENLSNNSEYIFVKE</sequence>
<dbReference type="EMBL" id="AM180355">
    <property type="protein sequence ID" value="CAJ68693.1"/>
    <property type="molecule type" value="Genomic_DNA"/>
</dbReference>
<dbReference type="RefSeq" id="YP_001088328.1">
    <property type="nucleotide sequence ID" value="NC_009089.1"/>
</dbReference>
<dbReference type="SMR" id="Q187D2"/>
<dbReference type="STRING" id="272563.CD630_18230"/>
<dbReference type="EnsemblBacteria" id="CAJ68693">
    <property type="protein sequence ID" value="CAJ68693"/>
    <property type="gene ID" value="CD630_18230"/>
</dbReference>
<dbReference type="KEGG" id="cdf:CD630_18230"/>
<dbReference type="KEGG" id="pdc:CDIF630_02024"/>
<dbReference type="PATRIC" id="fig|272563.120.peg.1918"/>
<dbReference type="eggNOG" id="COG3022">
    <property type="taxonomic scope" value="Bacteria"/>
</dbReference>
<dbReference type="OrthoDB" id="9777133at2"/>
<dbReference type="PhylomeDB" id="Q187D2"/>
<dbReference type="BioCyc" id="PDIF272563:G12WB-1967-MONOMER"/>
<dbReference type="Proteomes" id="UP000001978">
    <property type="component" value="Chromosome"/>
</dbReference>
<dbReference type="GO" id="GO:0005829">
    <property type="term" value="C:cytosol"/>
    <property type="evidence" value="ECO:0007669"/>
    <property type="project" value="TreeGrafter"/>
</dbReference>
<dbReference type="GO" id="GO:0033194">
    <property type="term" value="P:response to hydroperoxide"/>
    <property type="evidence" value="ECO:0007669"/>
    <property type="project" value="TreeGrafter"/>
</dbReference>
<dbReference type="HAMAP" id="MF_00652">
    <property type="entry name" value="UPF0246"/>
    <property type="match status" value="1"/>
</dbReference>
<dbReference type="InterPro" id="IPR005583">
    <property type="entry name" value="YaaA"/>
</dbReference>
<dbReference type="NCBIfam" id="NF002543">
    <property type="entry name" value="PRK02101.1-4"/>
    <property type="match status" value="1"/>
</dbReference>
<dbReference type="PANTHER" id="PTHR30283:SF4">
    <property type="entry name" value="PEROXIDE STRESS RESISTANCE PROTEIN YAAA"/>
    <property type="match status" value="1"/>
</dbReference>
<dbReference type="PANTHER" id="PTHR30283">
    <property type="entry name" value="PEROXIDE STRESS RESPONSE PROTEIN YAAA"/>
    <property type="match status" value="1"/>
</dbReference>
<dbReference type="Pfam" id="PF03883">
    <property type="entry name" value="H2O2_YaaD"/>
    <property type="match status" value="1"/>
</dbReference>
<name>Y1823_CLOD6</name>
<evidence type="ECO:0000255" key="1">
    <source>
        <dbReference type="HAMAP-Rule" id="MF_00652"/>
    </source>
</evidence>
<gene>
    <name type="ordered locus">CD630_18230</name>
</gene>
<protein>
    <recommendedName>
        <fullName evidence="1">UPF0246 protein CD630_18230</fullName>
    </recommendedName>
</protein>
<comment type="similarity">
    <text evidence="1">Belongs to the UPF0246 family.</text>
</comment>
<feature type="chain" id="PRO_0000262007" description="UPF0246 protein CD630_18230">
    <location>
        <begin position="1"/>
        <end position="247"/>
    </location>
</feature>